<protein>
    <recommendedName>
        <fullName>Putative 2-aminoethylphosphonate transport system permease protein PhnU</fullName>
    </recommendedName>
</protein>
<accession>Q8Z8W9</accession>
<accession>Q7C878</accession>
<evidence type="ECO:0000250" key="1"/>
<evidence type="ECO:0000255" key="2">
    <source>
        <dbReference type="PROSITE-ProRule" id="PRU00441"/>
    </source>
</evidence>
<evidence type="ECO:0000305" key="3"/>
<dbReference type="EMBL" id="AL513382">
    <property type="protein sequence ID" value="CAD08883.1"/>
    <property type="molecule type" value="Genomic_DNA"/>
</dbReference>
<dbReference type="EMBL" id="AE014613">
    <property type="protein sequence ID" value="AAO70026.1"/>
    <property type="molecule type" value="Genomic_DNA"/>
</dbReference>
<dbReference type="RefSeq" id="NP_455021.1">
    <property type="nucleotide sequence ID" value="NC_003198.1"/>
</dbReference>
<dbReference type="RefSeq" id="WP_000052708.1">
    <property type="nucleotide sequence ID" value="NZ_WSUR01000026.1"/>
</dbReference>
<dbReference type="SMR" id="Q8Z8W9"/>
<dbReference type="STRING" id="220341.gene:17584488"/>
<dbReference type="KEGG" id="stt:t2436"/>
<dbReference type="KEGG" id="sty:STY0466"/>
<dbReference type="PATRIC" id="fig|220341.7.peg.467"/>
<dbReference type="eggNOG" id="COG0555">
    <property type="taxonomic scope" value="Bacteria"/>
</dbReference>
<dbReference type="HOGENOM" id="CLU_016047_18_0_6"/>
<dbReference type="OMA" id="TPFVMRP"/>
<dbReference type="OrthoDB" id="6465574at2"/>
<dbReference type="Proteomes" id="UP000000541">
    <property type="component" value="Chromosome"/>
</dbReference>
<dbReference type="Proteomes" id="UP000002670">
    <property type="component" value="Chromosome"/>
</dbReference>
<dbReference type="GO" id="GO:0005886">
    <property type="term" value="C:plasma membrane"/>
    <property type="evidence" value="ECO:0007669"/>
    <property type="project" value="UniProtKB-SubCell"/>
</dbReference>
<dbReference type="GO" id="GO:0033223">
    <property type="term" value="P:2-aminoethylphosphonate transport"/>
    <property type="evidence" value="ECO:0007669"/>
    <property type="project" value="InterPro"/>
</dbReference>
<dbReference type="GO" id="GO:0055085">
    <property type="term" value="P:transmembrane transport"/>
    <property type="evidence" value="ECO:0007669"/>
    <property type="project" value="InterPro"/>
</dbReference>
<dbReference type="CDD" id="cd06261">
    <property type="entry name" value="TM_PBP2"/>
    <property type="match status" value="1"/>
</dbReference>
<dbReference type="Gene3D" id="1.10.3720.10">
    <property type="entry name" value="MetI-like"/>
    <property type="match status" value="1"/>
</dbReference>
<dbReference type="InterPro" id="IPR017636">
    <property type="entry name" value="AminoethylPonate_ABC_perm-PhnU"/>
</dbReference>
<dbReference type="InterPro" id="IPR000515">
    <property type="entry name" value="MetI-like"/>
</dbReference>
<dbReference type="InterPro" id="IPR035906">
    <property type="entry name" value="MetI-like_sf"/>
</dbReference>
<dbReference type="NCBIfam" id="TIGR03226">
    <property type="entry name" value="PhnU"/>
    <property type="match status" value="1"/>
</dbReference>
<dbReference type="NCBIfam" id="NF011624">
    <property type="entry name" value="PRK15050.1"/>
    <property type="match status" value="1"/>
</dbReference>
<dbReference type="PANTHER" id="PTHR43357">
    <property type="entry name" value="INNER MEMBRANE ABC TRANSPORTER PERMEASE PROTEIN YDCV"/>
    <property type="match status" value="1"/>
</dbReference>
<dbReference type="PANTHER" id="PTHR43357:SF4">
    <property type="entry name" value="INNER MEMBRANE ABC TRANSPORTER PERMEASE PROTEIN YDCV"/>
    <property type="match status" value="1"/>
</dbReference>
<dbReference type="Pfam" id="PF00528">
    <property type="entry name" value="BPD_transp_1"/>
    <property type="match status" value="1"/>
</dbReference>
<dbReference type="SUPFAM" id="SSF161098">
    <property type="entry name" value="MetI-like"/>
    <property type="match status" value="1"/>
</dbReference>
<dbReference type="PROSITE" id="PS50928">
    <property type="entry name" value="ABC_TM1"/>
    <property type="match status" value="1"/>
</dbReference>
<gene>
    <name type="primary">phnU</name>
    <name type="ordered locus">STY0466</name>
    <name type="ordered locus">t2436</name>
</gene>
<organism>
    <name type="scientific">Salmonella typhi</name>
    <dbReference type="NCBI Taxonomy" id="90370"/>
    <lineage>
        <taxon>Bacteria</taxon>
        <taxon>Pseudomonadati</taxon>
        <taxon>Pseudomonadota</taxon>
        <taxon>Gammaproteobacteria</taxon>
        <taxon>Enterobacterales</taxon>
        <taxon>Enterobacteriaceae</taxon>
        <taxon>Salmonella</taxon>
    </lineage>
</organism>
<name>PHNU_SALTI</name>
<proteinExistence type="inferred from homology"/>
<reference key="1">
    <citation type="journal article" date="2001" name="Nature">
        <title>Complete genome sequence of a multiple drug resistant Salmonella enterica serovar Typhi CT18.</title>
        <authorList>
            <person name="Parkhill J."/>
            <person name="Dougan G."/>
            <person name="James K.D."/>
            <person name="Thomson N.R."/>
            <person name="Pickard D."/>
            <person name="Wain J."/>
            <person name="Churcher C.M."/>
            <person name="Mungall K.L."/>
            <person name="Bentley S.D."/>
            <person name="Holden M.T.G."/>
            <person name="Sebaihia M."/>
            <person name="Baker S."/>
            <person name="Basham D."/>
            <person name="Brooks K."/>
            <person name="Chillingworth T."/>
            <person name="Connerton P."/>
            <person name="Cronin A."/>
            <person name="Davis P."/>
            <person name="Davies R.M."/>
            <person name="Dowd L."/>
            <person name="White N."/>
            <person name="Farrar J."/>
            <person name="Feltwell T."/>
            <person name="Hamlin N."/>
            <person name="Haque A."/>
            <person name="Hien T.T."/>
            <person name="Holroyd S."/>
            <person name="Jagels K."/>
            <person name="Krogh A."/>
            <person name="Larsen T.S."/>
            <person name="Leather S."/>
            <person name="Moule S."/>
            <person name="O'Gaora P."/>
            <person name="Parry C."/>
            <person name="Quail M.A."/>
            <person name="Rutherford K.M."/>
            <person name="Simmonds M."/>
            <person name="Skelton J."/>
            <person name="Stevens K."/>
            <person name="Whitehead S."/>
            <person name="Barrell B.G."/>
        </authorList>
    </citation>
    <scope>NUCLEOTIDE SEQUENCE [LARGE SCALE GENOMIC DNA]</scope>
    <source>
        <strain>CT18</strain>
    </source>
</reference>
<reference key="2">
    <citation type="journal article" date="2003" name="J. Bacteriol.">
        <title>Comparative genomics of Salmonella enterica serovar Typhi strains Ty2 and CT18.</title>
        <authorList>
            <person name="Deng W."/>
            <person name="Liou S.-R."/>
            <person name="Plunkett G. III"/>
            <person name="Mayhew G.F."/>
            <person name="Rose D.J."/>
            <person name="Burland V."/>
            <person name="Kodoyianni V."/>
            <person name="Schwartz D.C."/>
            <person name="Blattner F.R."/>
        </authorList>
    </citation>
    <scope>NUCLEOTIDE SEQUENCE [LARGE SCALE GENOMIC DNA]</scope>
    <source>
        <strain>ATCC 700931 / Ty2</strain>
    </source>
</reference>
<feature type="chain" id="PRO_0000286745" description="Putative 2-aminoethylphosphonate transport system permease protein PhnU">
    <location>
        <begin position="1"/>
        <end position="289"/>
    </location>
</feature>
<feature type="transmembrane region" description="Helical" evidence="2">
    <location>
        <begin position="19"/>
        <end position="39"/>
    </location>
</feature>
<feature type="transmembrane region" description="Helical" evidence="2">
    <location>
        <begin position="76"/>
        <end position="96"/>
    </location>
</feature>
<feature type="transmembrane region" description="Helical" evidence="2">
    <location>
        <begin position="111"/>
        <end position="131"/>
    </location>
</feature>
<feature type="transmembrane region" description="Helical" evidence="2">
    <location>
        <begin position="150"/>
        <end position="170"/>
    </location>
</feature>
<feature type="transmembrane region" description="Helical" evidence="2">
    <location>
        <begin position="202"/>
        <end position="222"/>
    </location>
</feature>
<feature type="transmembrane region" description="Helical" evidence="2">
    <location>
        <begin position="254"/>
        <end position="274"/>
    </location>
</feature>
<feature type="domain" description="ABC transmembrane type-1" evidence="2">
    <location>
        <begin position="68"/>
        <end position="275"/>
    </location>
</feature>
<keyword id="KW-0997">Cell inner membrane</keyword>
<keyword id="KW-1003">Cell membrane</keyword>
<keyword id="KW-0472">Membrane</keyword>
<keyword id="KW-0812">Transmembrane</keyword>
<keyword id="KW-1133">Transmembrane helix</keyword>
<keyword id="KW-0813">Transport</keyword>
<comment type="function">
    <text evidence="1">Probably part of the PhnSTUV complex (TC 3.A.1.11.5) involved in 2-aminoethylphosphonate import. Probably responsible for the translocation of the substrate across the membrane (By similarity).</text>
</comment>
<comment type="subcellular location">
    <subcellularLocation>
        <location evidence="3">Cell inner membrane</location>
        <topology evidence="2">Multi-pass membrane protein</topology>
    </subcellularLocation>
</comment>
<comment type="similarity">
    <text evidence="3">Belongs to the binding-protein-dependent transport system permease family.</text>
</comment>
<sequence>MSLILPLEKPALNLRPLLWLLLPLLALATLFFWPLSLIVEQALRGANGEIGLETFRQVVDSKRFVGALLNTLQIAFFATAGCLLLGSVMSLILVFIPFPGSELIGRVVDTFIALPTFLITLAFTFIYGSAGLLNGALMSLFAFELPPVDFLYSMQGVILAEITVFTPLVMRPLMAALRQIDKSQLEAASILGAHPLRVIGQVIFPAALPALMASGSLCLLLTTNEFGIVLFIGAKGVNTLPMMVYSKAILESDYTVACMIALINIVLSLGLFSLYRLAASRTGVRSQPC</sequence>